<keyword id="KW-0963">Cytoplasm</keyword>
<keyword id="KW-0312">Gluconeogenesis</keyword>
<keyword id="KW-0324">Glycolysis</keyword>
<keyword id="KW-0413">Isomerase</keyword>
<comment type="function">
    <text evidence="1">Involved in the gluconeogenesis. Catalyzes stereospecifically the conversion of dihydroxyacetone phosphate (DHAP) to D-glyceraldehyde-3-phosphate (G3P).</text>
</comment>
<comment type="catalytic activity">
    <reaction evidence="1">
        <text>D-glyceraldehyde 3-phosphate = dihydroxyacetone phosphate</text>
        <dbReference type="Rhea" id="RHEA:18585"/>
        <dbReference type="ChEBI" id="CHEBI:57642"/>
        <dbReference type="ChEBI" id="CHEBI:59776"/>
        <dbReference type="EC" id="5.3.1.1"/>
    </reaction>
</comment>
<comment type="pathway">
    <text evidence="1">Carbohydrate biosynthesis; gluconeogenesis.</text>
</comment>
<comment type="pathway">
    <text evidence="1">Carbohydrate degradation; glycolysis; D-glyceraldehyde 3-phosphate from glycerone phosphate: step 1/1.</text>
</comment>
<comment type="subunit">
    <text evidence="1">Homodimer.</text>
</comment>
<comment type="subcellular location">
    <subcellularLocation>
        <location evidence="1">Cytoplasm</location>
    </subcellularLocation>
</comment>
<comment type="similarity">
    <text evidence="1">Belongs to the triosephosphate isomerase family.</text>
</comment>
<accession>A8YUE4</accession>
<organism>
    <name type="scientific">Lactobacillus helveticus (strain DPC 4571)</name>
    <dbReference type="NCBI Taxonomy" id="405566"/>
    <lineage>
        <taxon>Bacteria</taxon>
        <taxon>Bacillati</taxon>
        <taxon>Bacillota</taxon>
        <taxon>Bacilli</taxon>
        <taxon>Lactobacillales</taxon>
        <taxon>Lactobacillaceae</taxon>
        <taxon>Lactobacillus</taxon>
    </lineage>
</organism>
<dbReference type="EC" id="5.3.1.1" evidence="1"/>
<dbReference type="EMBL" id="CP000517">
    <property type="protein sequence ID" value="ABX26882.1"/>
    <property type="molecule type" value="Genomic_DNA"/>
</dbReference>
<dbReference type="RefSeq" id="WP_012211630.1">
    <property type="nucleotide sequence ID" value="NC_010080.1"/>
</dbReference>
<dbReference type="SMR" id="A8YUE4"/>
<dbReference type="KEGG" id="lhe:lhv_0745"/>
<dbReference type="eggNOG" id="COG0149">
    <property type="taxonomic scope" value="Bacteria"/>
</dbReference>
<dbReference type="HOGENOM" id="CLU_024251_2_3_9"/>
<dbReference type="UniPathway" id="UPA00109">
    <property type="reaction ID" value="UER00189"/>
</dbReference>
<dbReference type="UniPathway" id="UPA00138"/>
<dbReference type="Proteomes" id="UP000000790">
    <property type="component" value="Chromosome"/>
</dbReference>
<dbReference type="GO" id="GO:0005829">
    <property type="term" value="C:cytosol"/>
    <property type="evidence" value="ECO:0007669"/>
    <property type="project" value="TreeGrafter"/>
</dbReference>
<dbReference type="GO" id="GO:0004807">
    <property type="term" value="F:triose-phosphate isomerase activity"/>
    <property type="evidence" value="ECO:0007669"/>
    <property type="project" value="UniProtKB-UniRule"/>
</dbReference>
<dbReference type="GO" id="GO:0006094">
    <property type="term" value="P:gluconeogenesis"/>
    <property type="evidence" value="ECO:0007669"/>
    <property type="project" value="UniProtKB-UniRule"/>
</dbReference>
<dbReference type="GO" id="GO:0046166">
    <property type="term" value="P:glyceraldehyde-3-phosphate biosynthetic process"/>
    <property type="evidence" value="ECO:0007669"/>
    <property type="project" value="TreeGrafter"/>
</dbReference>
<dbReference type="GO" id="GO:0019563">
    <property type="term" value="P:glycerol catabolic process"/>
    <property type="evidence" value="ECO:0007669"/>
    <property type="project" value="TreeGrafter"/>
</dbReference>
<dbReference type="GO" id="GO:0006096">
    <property type="term" value="P:glycolytic process"/>
    <property type="evidence" value="ECO:0007669"/>
    <property type="project" value="UniProtKB-UniRule"/>
</dbReference>
<dbReference type="CDD" id="cd00311">
    <property type="entry name" value="TIM"/>
    <property type="match status" value="1"/>
</dbReference>
<dbReference type="FunFam" id="3.20.20.70:FF:000016">
    <property type="entry name" value="Triosephosphate isomerase"/>
    <property type="match status" value="1"/>
</dbReference>
<dbReference type="Gene3D" id="3.20.20.70">
    <property type="entry name" value="Aldolase class I"/>
    <property type="match status" value="1"/>
</dbReference>
<dbReference type="HAMAP" id="MF_00147_B">
    <property type="entry name" value="TIM_B"/>
    <property type="match status" value="1"/>
</dbReference>
<dbReference type="InterPro" id="IPR013785">
    <property type="entry name" value="Aldolase_TIM"/>
</dbReference>
<dbReference type="InterPro" id="IPR035990">
    <property type="entry name" value="TIM_sf"/>
</dbReference>
<dbReference type="InterPro" id="IPR022896">
    <property type="entry name" value="TrioseP_Isoase_bac/euk"/>
</dbReference>
<dbReference type="InterPro" id="IPR000652">
    <property type="entry name" value="Triosephosphate_isomerase"/>
</dbReference>
<dbReference type="InterPro" id="IPR020861">
    <property type="entry name" value="Triosephosphate_isomerase_AS"/>
</dbReference>
<dbReference type="NCBIfam" id="TIGR00419">
    <property type="entry name" value="tim"/>
    <property type="match status" value="1"/>
</dbReference>
<dbReference type="PANTHER" id="PTHR21139">
    <property type="entry name" value="TRIOSEPHOSPHATE ISOMERASE"/>
    <property type="match status" value="1"/>
</dbReference>
<dbReference type="PANTHER" id="PTHR21139:SF42">
    <property type="entry name" value="TRIOSEPHOSPHATE ISOMERASE"/>
    <property type="match status" value="1"/>
</dbReference>
<dbReference type="Pfam" id="PF00121">
    <property type="entry name" value="TIM"/>
    <property type="match status" value="1"/>
</dbReference>
<dbReference type="SUPFAM" id="SSF51351">
    <property type="entry name" value="Triosephosphate isomerase (TIM)"/>
    <property type="match status" value="1"/>
</dbReference>
<dbReference type="PROSITE" id="PS00171">
    <property type="entry name" value="TIM_1"/>
    <property type="match status" value="1"/>
</dbReference>
<dbReference type="PROSITE" id="PS51440">
    <property type="entry name" value="TIM_2"/>
    <property type="match status" value="1"/>
</dbReference>
<evidence type="ECO:0000255" key="1">
    <source>
        <dbReference type="HAMAP-Rule" id="MF_00147"/>
    </source>
</evidence>
<name>TPIS_LACH4</name>
<proteinExistence type="inferred from homology"/>
<sequence>MSRTPIIAGNWKLHMNPEQTAEFVDAVKDKLPDPSKVESLICAPAVDLDALRKAAKGSNLHIGAENCYFEDEGAYTGETSPKVLKEMGIDYVIIGHSERRGYFHETDEDINKKAKAIFANGLKPIICCGESLETREANKQEDWVVGQIKAALDGLTAEQVSNLVIAYEPIWAIGTGKTASSDQAEEMCKTIRETVKDLYNEETAENVRIQYGGSVKPANVKELMSKPDIDGGLVGGASLKPESYLELVNYQD</sequence>
<reference key="1">
    <citation type="journal article" date="2008" name="J. Bacteriol.">
        <title>Genome sequence of Lactobacillus helveticus: an organism distinguished by selective gene loss and IS element expansion.</title>
        <authorList>
            <person name="Callanan M."/>
            <person name="Kaleta P."/>
            <person name="O'Callaghan J."/>
            <person name="O'Sullivan O."/>
            <person name="Jordan K."/>
            <person name="McAuliffe O."/>
            <person name="Sangrador-Vegas A."/>
            <person name="Slattery L."/>
            <person name="Fitzgerald G.F."/>
            <person name="Beresford T."/>
            <person name="Ross R.P."/>
        </authorList>
    </citation>
    <scope>NUCLEOTIDE SEQUENCE [LARGE SCALE GENOMIC DNA]</scope>
    <source>
        <strain>DPC 4571</strain>
    </source>
</reference>
<gene>
    <name evidence="1" type="primary">tpiA</name>
    <name type="ordered locus">lhv_0745</name>
</gene>
<protein>
    <recommendedName>
        <fullName evidence="1">Triosephosphate isomerase</fullName>
        <shortName evidence="1">TIM</shortName>
        <shortName evidence="1">TPI</shortName>
        <ecNumber evidence="1">5.3.1.1</ecNumber>
    </recommendedName>
    <alternativeName>
        <fullName evidence="1">Triose-phosphate isomerase</fullName>
    </alternativeName>
</protein>
<feature type="chain" id="PRO_1000071488" description="Triosephosphate isomerase">
    <location>
        <begin position="1"/>
        <end position="252"/>
    </location>
</feature>
<feature type="active site" description="Electrophile" evidence="1">
    <location>
        <position position="96"/>
    </location>
</feature>
<feature type="active site" description="Proton acceptor" evidence="1">
    <location>
        <position position="168"/>
    </location>
</feature>
<feature type="binding site" evidence="1">
    <location>
        <begin position="10"/>
        <end position="12"/>
    </location>
    <ligand>
        <name>substrate</name>
    </ligand>
</feature>
<feature type="binding site" evidence="1">
    <location>
        <position position="174"/>
    </location>
    <ligand>
        <name>substrate</name>
    </ligand>
</feature>
<feature type="binding site" evidence="1">
    <location>
        <position position="214"/>
    </location>
    <ligand>
        <name>substrate</name>
    </ligand>
</feature>
<feature type="binding site" evidence="1">
    <location>
        <begin position="235"/>
        <end position="236"/>
    </location>
    <ligand>
        <name>substrate</name>
    </ligand>
</feature>